<evidence type="ECO:0000255" key="1">
    <source>
        <dbReference type="HAMAP-Rule" id="MF_00120"/>
    </source>
</evidence>
<gene>
    <name evidence="1" type="primary">gatA</name>
    <name type="ordered locus">Swol_0373</name>
</gene>
<name>GATA_SYNWW</name>
<feature type="chain" id="PRO_1000015924" description="Glutamyl-tRNA(Gln) amidotransferase subunit A">
    <location>
        <begin position="1"/>
        <end position="487"/>
    </location>
</feature>
<feature type="active site" description="Charge relay system" evidence="1">
    <location>
        <position position="75"/>
    </location>
</feature>
<feature type="active site" description="Charge relay system" evidence="1">
    <location>
        <position position="150"/>
    </location>
</feature>
<feature type="active site" description="Acyl-ester intermediate" evidence="1">
    <location>
        <position position="174"/>
    </location>
</feature>
<dbReference type="EC" id="6.3.5.7" evidence="1"/>
<dbReference type="EMBL" id="CP000448">
    <property type="protein sequence ID" value="ABI67712.1"/>
    <property type="molecule type" value="Genomic_DNA"/>
</dbReference>
<dbReference type="RefSeq" id="WP_011639820.1">
    <property type="nucleotide sequence ID" value="NC_008346.1"/>
</dbReference>
<dbReference type="SMR" id="Q0AZZ2"/>
<dbReference type="STRING" id="335541.Swol_0373"/>
<dbReference type="KEGG" id="swo:Swol_0373"/>
<dbReference type="eggNOG" id="COG0154">
    <property type="taxonomic scope" value="Bacteria"/>
</dbReference>
<dbReference type="HOGENOM" id="CLU_009600_0_3_9"/>
<dbReference type="OrthoDB" id="9811471at2"/>
<dbReference type="Proteomes" id="UP000001968">
    <property type="component" value="Chromosome"/>
</dbReference>
<dbReference type="GO" id="GO:0030956">
    <property type="term" value="C:glutamyl-tRNA(Gln) amidotransferase complex"/>
    <property type="evidence" value="ECO:0007669"/>
    <property type="project" value="InterPro"/>
</dbReference>
<dbReference type="GO" id="GO:0005524">
    <property type="term" value="F:ATP binding"/>
    <property type="evidence" value="ECO:0007669"/>
    <property type="project" value="UniProtKB-KW"/>
</dbReference>
<dbReference type="GO" id="GO:0050567">
    <property type="term" value="F:glutaminyl-tRNA synthase (glutamine-hydrolyzing) activity"/>
    <property type="evidence" value="ECO:0007669"/>
    <property type="project" value="UniProtKB-UniRule"/>
</dbReference>
<dbReference type="GO" id="GO:0006412">
    <property type="term" value="P:translation"/>
    <property type="evidence" value="ECO:0007669"/>
    <property type="project" value="UniProtKB-UniRule"/>
</dbReference>
<dbReference type="Gene3D" id="3.90.1300.10">
    <property type="entry name" value="Amidase signature (AS) domain"/>
    <property type="match status" value="1"/>
</dbReference>
<dbReference type="HAMAP" id="MF_00120">
    <property type="entry name" value="GatA"/>
    <property type="match status" value="1"/>
</dbReference>
<dbReference type="InterPro" id="IPR000120">
    <property type="entry name" value="Amidase"/>
</dbReference>
<dbReference type="InterPro" id="IPR020556">
    <property type="entry name" value="Amidase_CS"/>
</dbReference>
<dbReference type="InterPro" id="IPR023631">
    <property type="entry name" value="Amidase_dom"/>
</dbReference>
<dbReference type="InterPro" id="IPR036928">
    <property type="entry name" value="AS_sf"/>
</dbReference>
<dbReference type="InterPro" id="IPR004412">
    <property type="entry name" value="GatA"/>
</dbReference>
<dbReference type="NCBIfam" id="TIGR00132">
    <property type="entry name" value="gatA"/>
    <property type="match status" value="1"/>
</dbReference>
<dbReference type="PANTHER" id="PTHR11895:SF151">
    <property type="entry name" value="GLUTAMYL-TRNA(GLN) AMIDOTRANSFERASE SUBUNIT A"/>
    <property type="match status" value="1"/>
</dbReference>
<dbReference type="PANTHER" id="PTHR11895">
    <property type="entry name" value="TRANSAMIDASE"/>
    <property type="match status" value="1"/>
</dbReference>
<dbReference type="Pfam" id="PF01425">
    <property type="entry name" value="Amidase"/>
    <property type="match status" value="1"/>
</dbReference>
<dbReference type="SUPFAM" id="SSF75304">
    <property type="entry name" value="Amidase signature (AS) enzymes"/>
    <property type="match status" value="1"/>
</dbReference>
<dbReference type="PROSITE" id="PS00571">
    <property type="entry name" value="AMIDASES"/>
    <property type="match status" value="1"/>
</dbReference>
<keyword id="KW-0067">ATP-binding</keyword>
<keyword id="KW-0436">Ligase</keyword>
<keyword id="KW-0547">Nucleotide-binding</keyword>
<keyword id="KW-0648">Protein biosynthesis</keyword>
<keyword id="KW-1185">Reference proteome</keyword>
<protein>
    <recommendedName>
        <fullName evidence="1">Glutamyl-tRNA(Gln) amidotransferase subunit A</fullName>
        <shortName evidence="1">Glu-ADT subunit A</shortName>
        <ecNumber evidence="1">6.3.5.7</ecNumber>
    </recommendedName>
</protein>
<sequence length="487" mass="53172">MDLYKLTVHELQDKLLAGEISSEDIVKSLFSRIALVEEKAQAFITLCEETALEGARRIDQQDEYGGIKGIPYGLKDLFCTRGIKTTCASRMLENFVPSYESTASKLLNEKGGILLGKLNLDEFAMGSSTEQSAFFPSRNPWDWERVPGGSSGGCAAAVAAGEIPFALASDTGGSIRQPASYCGIVGLKPTYGRVSRWGVAAFASSLDQVGILSRDVRDCALILKIIAGKDPLDATSADTEVPNYCAFLDGEVKGMRIAYPREYFQHWVTESIRTAVMKALRKFEELGAIVEEVSLPHSEYALPAYYIVAPAEASTNLARFDGVRYGLRDDEADNVIDMFSLSRAQGFGPEVKRRIMLGTYALSSGYYDAYYLKAMKVRRLIASDFAKVFRDFDLIVSPTTPTTAFKLGEQIDDTLTLYMNDALTVPVNMAGLPGISIPCALDDGLPVGMQLIGRAFDEATLLKAAYAFEQNTDYHRLTPVPGGGINE</sequence>
<reference key="1">
    <citation type="journal article" date="2010" name="Environ. Microbiol.">
        <title>The genome of Syntrophomonas wolfei: new insights into syntrophic metabolism and biohydrogen production.</title>
        <authorList>
            <person name="Sieber J.R."/>
            <person name="Sims D.R."/>
            <person name="Han C."/>
            <person name="Kim E."/>
            <person name="Lykidis A."/>
            <person name="Lapidus A.L."/>
            <person name="McDonnald E."/>
            <person name="Rohlin L."/>
            <person name="Culley D.E."/>
            <person name="Gunsalus R."/>
            <person name="McInerney M.J."/>
        </authorList>
    </citation>
    <scope>NUCLEOTIDE SEQUENCE [LARGE SCALE GENOMIC DNA]</scope>
    <source>
        <strain>DSM 2245B / Goettingen</strain>
    </source>
</reference>
<organism>
    <name type="scientific">Syntrophomonas wolfei subsp. wolfei (strain DSM 2245B / Goettingen)</name>
    <dbReference type="NCBI Taxonomy" id="335541"/>
    <lineage>
        <taxon>Bacteria</taxon>
        <taxon>Bacillati</taxon>
        <taxon>Bacillota</taxon>
        <taxon>Clostridia</taxon>
        <taxon>Eubacteriales</taxon>
        <taxon>Syntrophomonadaceae</taxon>
        <taxon>Syntrophomonas</taxon>
    </lineage>
</organism>
<proteinExistence type="inferred from homology"/>
<comment type="function">
    <text evidence="1">Allows the formation of correctly charged Gln-tRNA(Gln) through the transamidation of misacylated Glu-tRNA(Gln) in organisms which lack glutaminyl-tRNA synthetase. The reaction takes place in the presence of glutamine and ATP through an activated gamma-phospho-Glu-tRNA(Gln).</text>
</comment>
<comment type="catalytic activity">
    <reaction evidence="1">
        <text>L-glutamyl-tRNA(Gln) + L-glutamine + ATP + H2O = L-glutaminyl-tRNA(Gln) + L-glutamate + ADP + phosphate + H(+)</text>
        <dbReference type="Rhea" id="RHEA:17521"/>
        <dbReference type="Rhea" id="RHEA-COMP:9681"/>
        <dbReference type="Rhea" id="RHEA-COMP:9684"/>
        <dbReference type="ChEBI" id="CHEBI:15377"/>
        <dbReference type="ChEBI" id="CHEBI:15378"/>
        <dbReference type="ChEBI" id="CHEBI:29985"/>
        <dbReference type="ChEBI" id="CHEBI:30616"/>
        <dbReference type="ChEBI" id="CHEBI:43474"/>
        <dbReference type="ChEBI" id="CHEBI:58359"/>
        <dbReference type="ChEBI" id="CHEBI:78520"/>
        <dbReference type="ChEBI" id="CHEBI:78521"/>
        <dbReference type="ChEBI" id="CHEBI:456216"/>
        <dbReference type="EC" id="6.3.5.7"/>
    </reaction>
</comment>
<comment type="subunit">
    <text evidence="1">Heterotrimer of A, B and C subunits.</text>
</comment>
<comment type="similarity">
    <text evidence="1">Belongs to the amidase family. GatA subfamily.</text>
</comment>
<accession>Q0AZZ2</accession>